<evidence type="ECO:0000250" key="1">
    <source>
        <dbReference type="UniProtKB" id="Q9WUD1"/>
    </source>
</evidence>
<evidence type="ECO:0000255" key="2"/>
<evidence type="ECO:0000269" key="3">
    <source>
    </source>
</evidence>
<evidence type="ECO:0000269" key="4">
    <source>
    </source>
</evidence>
<evidence type="ECO:0000269" key="5">
    <source>
    </source>
</evidence>
<evidence type="ECO:0000269" key="6">
    <source>
    </source>
</evidence>
<evidence type="ECO:0000269" key="7">
    <source>
    </source>
</evidence>
<evidence type="ECO:0000303" key="8">
    <source>
    </source>
</evidence>
<evidence type="ECO:0000303" key="9">
    <source>
    </source>
</evidence>
<evidence type="ECO:0000305" key="10"/>
<evidence type="ECO:0000312" key="11">
    <source>
        <dbReference type="Araport" id="AT3G07370"/>
    </source>
</evidence>
<evidence type="ECO:0000312" key="12">
    <source>
        <dbReference type="EMBL" id="AAF02162.1"/>
    </source>
</evidence>
<keyword id="KW-0175">Coiled coil</keyword>
<keyword id="KW-1185">Reference proteome</keyword>
<keyword id="KW-0677">Repeat</keyword>
<keyword id="KW-0802">TPR repeat</keyword>
<keyword id="KW-0808">Transferase</keyword>
<keyword id="KW-0833">Ubl conjugation pathway</keyword>
<accession>Q9SRS9</accession>
<protein>
    <recommendedName>
        <fullName evidence="10">E3 ubiquitin-protein ligase CHIP</fullName>
        <ecNumber evidence="4 5">2.3.2.27</ecNumber>
    </recommendedName>
    <alternativeName>
        <fullName evidence="8">Carboxyl terminus of HSC70-interacting protein</fullName>
        <shortName evidence="8">AtCHIP</shortName>
    </alternativeName>
    <alternativeName>
        <fullName>Plant U-box protein 61</fullName>
    </alternativeName>
    <alternativeName>
        <fullName evidence="10">RING-type E3 ubiquitin transferase CHIP</fullName>
    </alternativeName>
    <alternativeName>
        <fullName>U-box domain-containing protein 61</fullName>
    </alternativeName>
</protein>
<organism>
    <name type="scientific">Arabidopsis thaliana</name>
    <name type="common">Mouse-ear cress</name>
    <dbReference type="NCBI Taxonomy" id="3702"/>
    <lineage>
        <taxon>Eukaryota</taxon>
        <taxon>Viridiplantae</taxon>
        <taxon>Streptophyta</taxon>
        <taxon>Embryophyta</taxon>
        <taxon>Tracheophyta</taxon>
        <taxon>Spermatophyta</taxon>
        <taxon>Magnoliopsida</taxon>
        <taxon>eudicotyledons</taxon>
        <taxon>Gunneridae</taxon>
        <taxon>Pentapetalae</taxon>
        <taxon>rosids</taxon>
        <taxon>malvids</taxon>
        <taxon>Brassicales</taxon>
        <taxon>Brassicaceae</taxon>
        <taxon>Camelineae</taxon>
        <taxon>Arabidopsis</taxon>
    </lineage>
</organism>
<reference key="1">
    <citation type="journal article" date="2000" name="Nature">
        <title>Sequence and analysis of chromosome 3 of the plant Arabidopsis thaliana.</title>
        <authorList>
            <person name="Salanoubat M."/>
            <person name="Lemcke K."/>
            <person name="Rieger M."/>
            <person name="Ansorge W."/>
            <person name="Unseld M."/>
            <person name="Fartmann B."/>
            <person name="Valle G."/>
            <person name="Bloecker H."/>
            <person name="Perez-Alonso M."/>
            <person name="Obermaier B."/>
            <person name="Delseny M."/>
            <person name="Boutry M."/>
            <person name="Grivell L.A."/>
            <person name="Mache R."/>
            <person name="Puigdomenech P."/>
            <person name="De Simone V."/>
            <person name="Choisne N."/>
            <person name="Artiguenave F."/>
            <person name="Robert C."/>
            <person name="Brottier P."/>
            <person name="Wincker P."/>
            <person name="Cattolico L."/>
            <person name="Weissenbach J."/>
            <person name="Saurin W."/>
            <person name="Quetier F."/>
            <person name="Schaefer M."/>
            <person name="Mueller-Auer S."/>
            <person name="Gabel C."/>
            <person name="Fuchs M."/>
            <person name="Benes V."/>
            <person name="Wurmbach E."/>
            <person name="Drzonek H."/>
            <person name="Erfle H."/>
            <person name="Jordan N."/>
            <person name="Bangert S."/>
            <person name="Wiedelmann R."/>
            <person name="Kranz H."/>
            <person name="Voss H."/>
            <person name="Holland R."/>
            <person name="Brandt P."/>
            <person name="Nyakatura G."/>
            <person name="Vezzi A."/>
            <person name="D'Angelo M."/>
            <person name="Pallavicini A."/>
            <person name="Toppo S."/>
            <person name="Simionati B."/>
            <person name="Conrad A."/>
            <person name="Hornischer K."/>
            <person name="Kauer G."/>
            <person name="Loehnert T.-H."/>
            <person name="Nordsiek G."/>
            <person name="Reichelt J."/>
            <person name="Scharfe M."/>
            <person name="Schoen O."/>
            <person name="Bargues M."/>
            <person name="Terol J."/>
            <person name="Climent J."/>
            <person name="Navarro P."/>
            <person name="Collado C."/>
            <person name="Perez-Perez A."/>
            <person name="Ottenwaelder B."/>
            <person name="Duchemin D."/>
            <person name="Cooke R."/>
            <person name="Laudie M."/>
            <person name="Berger-Llauro C."/>
            <person name="Purnelle B."/>
            <person name="Masuy D."/>
            <person name="de Haan M."/>
            <person name="Maarse A.C."/>
            <person name="Alcaraz J.-P."/>
            <person name="Cottet A."/>
            <person name="Casacuberta E."/>
            <person name="Monfort A."/>
            <person name="Argiriou A."/>
            <person name="Flores M."/>
            <person name="Liguori R."/>
            <person name="Vitale D."/>
            <person name="Mannhaupt G."/>
            <person name="Haase D."/>
            <person name="Schoof H."/>
            <person name="Rudd S."/>
            <person name="Zaccaria P."/>
            <person name="Mewes H.-W."/>
            <person name="Mayer K.F.X."/>
            <person name="Kaul S."/>
            <person name="Town C.D."/>
            <person name="Koo H.L."/>
            <person name="Tallon L.J."/>
            <person name="Jenkins J."/>
            <person name="Rooney T."/>
            <person name="Rizzo M."/>
            <person name="Walts A."/>
            <person name="Utterback T."/>
            <person name="Fujii C.Y."/>
            <person name="Shea T.P."/>
            <person name="Creasy T.H."/>
            <person name="Haas B."/>
            <person name="Maiti R."/>
            <person name="Wu D."/>
            <person name="Peterson J."/>
            <person name="Van Aken S."/>
            <person name="Pai G."/>
            <person name="Militscher J."/>
            <person name="Sellers P."/>
            <person name="Gill J.E."/>
            <person name="Feldblyum T.V."/>
            <person name="Preuss D."/>
            <person name="Lin X."/>
            <person name="Nierman W.C."/>
            <person name="Salzberg S.L."/>
            <person name="White O."/>
            <person name="Venter J.C."/>
            <person name="Fraser C.M."/>
            <person name="Kaneko T."/>
            <person name="Nakamura Y."/>
            <person name="Sato S."/>
            <person name="Kato T."/>
            <person name="Asamizu E."/>
            <person name="Sasamoto S."/>
            <person name="Kimura T."/>
            <person name="Idesawa K."/>
            <person name="Kawashima K."/>
            <person name="Kishida Y."/>
            <person name="Kiyokawa C."/>
            <person name="Kohara M."/>
            <person name="Matsumoto M."/>
            <person name="Matsuno A."/>
            <person name="Muraki A."/>
            <person name="Nakayama S."/>
            <person name="Nakazaki N."/>
            <person name="Shinpo S."/>
            <person name="Takeuchi C."/>
            <person name="Wada T."/>
            <person name="Watanabe A."/>
            <person name="Yamada M."/>
            <person name="Yasuda M."/>
            <person name="Tabata S."/>
        </authorList>
    </citation>
    <scope>NUCLEOTIDE SEQUENCE [LARGE SCALE GENOMIC DNA]</scope>
    <source>
        <strain>cv. Columbia</strain>
    </source>
</reference>
<reference key="2">
    <citation type="journal article" date="2017" name="Plant J.">
        <title>Araport11: a complete reannotation of the Arabidopsis thaliana reference genome.</title>
        <authorList>
            <person name="Cheng C.Y."/>
            <person name="Krishnakumar V."/>
            <person name="Chan A.P."/>
            <person name="Thibaud-Nissen F."/>
            <person name="Schobel S."/>
            <person name="Town C.D."/>
        </authorList>
    </citation>
    <scope>GENOME REANNOTATION</scope>
    <source>
        <strain>cv. Columbia</strain>
    </source>
</reference>
<reference key="3">
    <citation type="journal article" date="2003" name="Science">
        <title>Empirical analysis of transcriptional activity in the Arabidopsis genome.</title>
        <authorList>
            <person name="Yamada K."/>
            <person name="Lim J."/>
            <person name="Dale J.M."/>
            <person name="Chen H."/>
            <person name="Shinn P."/>
            <person name="Palm C.J."/>
            <person name="Southwick A.M."/>
            <person name="Wu H.C."/>
            <person name="Kim C.J."/>
            <person name="Nguyen M."/>
            <person name="Pham P.K."/>
            <person name="Cheuk R.F."/>
            <person name="Karlin-Newmann G."/>
            <person name="Liu S.X."/>
            <person name="Lam B."/>
            <person name="Sakano H."/>
            <person name="Wu T."/>
            <person name="Yu G."/>
            <person name="Miranda M."/>
            <person name="Quach H.L."/>
            <person name="Tripp M."/>
            <person name="Chang C.H."/>
            <person name="Lee J.M."/>
            <person name="Toriumi M.J."/>
            <person name="Chan M.M."/>
            <person name="Tang C.C."/>
            <person name="Onodera C.S."/>
            <person name="Deng J.M."/>
            <person name="Akiyama K."/>
            <person name="Ansari Y."/>
            <person name="Arakawa T."/>
            <person name="Banh J."/>
            <person name="Banno F."/>
            <person name="Bowser L."/>
            <person name="Brooks S.Y."/>
            <person name="Carninci P."/>
            <person name="Chao Q."/>
            <person name="Choy N."/>
            <person name="Enju A."/>
            <person name="Goldsmith A.D."/>
            <person name="Gurjal M."/>
            <person name="Hansen N.F."/>
            <person name="Hayashizaki Y."/>
            <person name="Johnson-Hopson C."/>
            <person name="Hsuan V.W."/>
            <person name="Iida K."/>
            <person name="Karnes M."/>
            <person name="Khan S."/>
            <person name="Koesema E."/>
            <person name="Ishida J."/>
            <person name="Jiang P.X."/>
            <person name="Jones T."/>
            <person name="Kawai J."/>
            <person name="Kamiya A."/>
            <person name="Meyers C."/>
            <person name="Nakajima M."/>
            <person name="Narusaka M."/>
            <person name="Seki M."/>
            <person name="Sakurai T."/>
            <person name="Satou M."/>
            <person name="Tamse R."/>
            <person name="Vaysberg M."/>
            <person name="Wallender E.K."/>
            <person name="Wong C."/>
            <person name="Yamamura Y."/>
            <person name="Yuan S."/>
            <person name="Shinozaki K."/>
            <person name="Davis R.W."/>
            <person name="Theologis A."/>
            <person name="Ecker J.R."/>
        </authorList>
    </citation>
    <scope>NUCLEOTIDE SEQUENCE [LARGE SCALE MRNA]</scope>
    <source>
        <strain>cv. Columbia</strain>
    </source>
</reference>
<reference key="4">
    <citation type="journal article" date="2003" name="Plant Physiol.">
        <title>AtCHIP, a U-box-containing E3 ubiquitin ligase, plays a critical role in temperature stress tolerance in Arabidopsis.</title>
        <authorList>
            <person name="Yan J."/>
            <person name="Wang J."/>
            <person name="Li Q."/>
            <person name="Hwang J.R."/>
            <person name="Patterson C."/>
            <person name="Zhang H."/>
        </authorList>
    </citation>
    <scope>FUNCTION</scope>
    <scope>INDUCTION BY ABIOTIC STRESSES</scope>
</reference>
<reference key="5">
    <citation type="journal article" date="2006" name="Plant J.">
        <title>AtCHIP functions as an E3 ubiquitin ligase of protein phosphatase 2A subunits and alters plant response to abscisic acid treatment.</title>
        <authorList>
            <person name="Luo J."/>
            <person name="Shen G."/>
            <person name="Yan J."/>
            <person name="He C."/>
            <person name="Zhang H."/>
        </authorList>
    </citation>
    <scope>FUNCTION</scope>
    <scope>CATALYTIC ACTIVITY</scope>
    <scope>PATHWAY</scope>
    <scope>INTERACTION WITH PP2AA1; PP2AA3; PP2A5; UBC8; UBC9 AND UBC10</scope>
</reference>
<reference key="6">
    <citation type="journal article" date="2007" name="Plant J.">
        <title>The chloroplast protease subunit ClpP4 is a substrate of the E3 ligase AtCHIP and plays an important role in chloroplast function.</title>
        <authorList>
            <person name="Shen G."/>
            <person name="Yan J."/>
            <person name="Pasapula V."/>
            <person name="Luo J."/>
            <person name="He C."/>
            <person name="Clarke A.K."/>
            <person name="Zhang H."/>
        </authorList>
    </citation>
    <scope>FUNCTION</scope>
    <scope>CATALYTIC ACTIVITY</scope>
    <scope>PATHWAY</scope>
    <scope>INTERACTION WITH CLPP4</scope>
</reference>
<reference key="7">
    <citation type="journal article" date="2007" name="Plant J.">
        <title>The E3 ligase AtCHIP ubiquitylates FtsH1, a component of the chloroplast FtsH protease, and affects protein degradation in chloroplasts.</title>
        <authorList>
            <person name="Shen G."/>
            <person name="Adam Z."/>
            <person name="Zhang H."/>
        </authorList>
    </citation>
    <scope>FUNCTION</scope>
    <scope>INTERACTION WITH FTSH1 AND FTSH2</scope>
</reference>
<reference key="8">
    <citation type="journal article" date="2009" name="Plant Cell">
        <title>Heat shock protein cognate 70-4 and an E3 ubiquitin ligase, CHIP, mediate plastid-destined precursor degradation through the ubiquitin-26S proteasome system in Arabidopsis.</title>
        <authorList>
            <person name="Lee S."/>
            <person name="Lee D.W."/>
            <person name="Lee Y."/>
            <person name="Mayer U."/>
            <person name="Stierhof Y.D."/>
            <person name="Lee S."/>
            <person name="Jurgens G."/>
            <person name="Hwang I."/>
        </authorList>
    </citation>
    <scope>FUNCTION</scope>
    <scope>INTERACTION WITH HSC70-4</scope>
</reference>
<dbReference type="EC" id="2.3.2.27" evidence="4 5"/>
<dbReference type="EMBL" id="AC009853">
    <property type="protein sequence ID" value="AAF02162.1"/>
    <property type="molecule type" value="Genomic_DNA"/>
</dbReference>
<dbReference type="EMBL" id="CP002686">
    <property type="protein sequence ID" value="AEE74535.1"/>
    <property type="molecule type" value="Genomic_DNA"/>
</dbReference>
<dbReference type="EMBL" id="AY042807">
    <property type="protein sequence ID" value="AAK68747.1"/>
    <property type="molecule type" value="mRNA"/>
</dbReference>
<dbReference type="EMBL" id="AY064647">
    <property type="protein sequence ID" value="AAL47358.1"/>
    <property type="molecule type" value="mRNA"/>
</dbReference>
<dbReference type="RefSeq" id="NP_566305.1">
    <property type="nucleotide sequence ID" value="NM_111616.3"/>
</dbReference>
<dbReference type="SMR" id="Q9SRS9"/>
<dbReference type="BioGRID" id="5260">
    <property type="interactions" value="17"/>
</dbReference>
<dbReference type="FunCoup" id="Q9SRS9">
    <property type="interactions" value="3436"/>
</dbReference>
<dbReference type="STRING" id="3702.Q9SRS9"/>
<dbReference type="MetOSite" id="Q9SRS9"/>
<dbReference type="PaxDb" id="3702-AT3G07370.1"/>
<dbReference type="ProteomicsDB" id="245190"/>
<dbReference type="EnsemblPlants" id="AT3G07370.1">
    <property type="protein sequence ID" value="AT3G07370.1"/>
    <property type="gene ID" value="AT3G07370"/>
</dbReference>
<dbReference type="GeneID" id="819925"/>
<dbReference type="Gramene" id="AT3G07370.1">
    <property type="protein sequence ID" value="AT3G07370.1"/>
    <property type="gene ID" value="AT3G07370"/>
</dbReference>
<dbReference type="KEGG" id="ath:AT3G07370"/>
<dbReference type="Araport" id="AT3G07370"/>
<dbReference type="TAIR" id="AT3G07370">
    <property type="gene designation" value="CHIP"/>
</dbReference>
<dbReference type="eggNOG" id="KOG4642">
    <property type="taxonomic scope" value="Eukaryota"/>
</dbReference>
<dbReference type="HOGENOM" id="CLU_056455_0_0_1"/>
<dbReference type="InParanoid" id="Q9SRS9"/>
<dbReference type="OMA" id="WAGVEHD"/>
<dbReference type="OrthoDB" id="629492at2759"/>
<dbReference type="PhylomeDB" id="Q9SRS9"/>
<dbReference type="UniPathway" id="UPA00143"/>
<dbReference type="PRO" id="PR:Q9SRS9"/>
<dbReference type="Proteomes" id="UP000006548">
    <property type="component" value="Chromosome 3"/>
</dbReference>
<dbReference type="ExpressionAtlas" id="Q9SRS9">
    <property type="expression patterns" value="baseline and differential"/>
</dbReference>
<dbReference type="GO" id="GO:0051087">
    <property type="term" value="F:protein-folding chaperone binding"/>
    <property type="evidence" value="ECO:0000353"/>
    <property type="project" value="UniProtKB"/>
</dbReference>
<dbReference type="GO" id="GO:0004842">
    <property type="term" value="F:ubiquitin-protein transferase activity"/>
    <property type="evidence" value="ECO:0000314"/>
    <property type="project" value="TAIR"/>
</dbReference>
<dbReference type="GO" id="GO:0016567">
    <property type="term" value="P:protein ubiquitination"/>
    <property type="evidence" value="ECO:0000314"/>
    <property type="project" value="TAIR"/>
</dbReference>
<dbReference type="GO" id="GO:0009737">
    <property type="term" value="P:response to abscisic acid"/>
    <property type="evidence" value="ECO:0000315"/>
    <property type="project" value="TAIR"/>
</dbReference>
<dbReference type="GO" id="GO:0009651">
    <property type="term" value="P:response to salt stress"/>
    <property type="evidence" value="ECO:0000270"/>
    <property type="project" value="TAIR"/>
</dbReference>
<dbReference type="GO" id="GO:0009266">
    <property type="term" value="P:response to temperature stimulus"/>
    <property type="evidence" value="ECO:0000315"/>
    <property type="project" value="TAIR"/>
</dbReference>
<dbReference type="CDD" id="cd16654">
    <property type="entry name" value="RING-Ubox_CHIP"/>
    <property type="match status" value="1"/>
</dbReference>
<dbReference type="FunFam" id="1.25.40.10:FF:002051">
    <property type="entry name" value="E3 ubiquitin-protein ligase CHIP"/>
    <property type="match status" value="1"/>
</dbReference>
<dbReference type="Gene3D" id="1.25.40.10">
    <property type="entry name" value="Tetratricopeptide repeat domain"/>
    <property type="match status" value="1"/>
</dbReference>
<dbReference type="Gene3D" id="3.30.40.10">
    <property type="entry name" value="Zinc/RING finger domain, C3HC4 (zinc finger)"/>
    <property type="match status" value="1"/>
</dbReference>
<dbReference type="InterPro" id="IPR045202">
    <property type="entry name" value="CHIP_RING-Ubox"/>
</dbReference>
<dbReference type="InterPro" id="IPR011990">
    <property type="entry name" value="TPR-like_helical_dom_sf"/>
</dbReference>
<dbReference type="InterPro" id="IPR019734">
    <property type="entry name" value="TPR_rpt"/>
</dbReference>
<dbReference type="InterPro" id="IPR003613">
    <property type="entry name" value="Ubox_domain"/>
</dbReference>
<dbReference type="InterPro" id="IPR013083">
    <property type="entry name" value="Znf_RING/FYVE/PHD"/>
</dbReference>
<dbReference type="PANTHER" id="PTHR46803">
    <property type="entry name" value="E3 UBIQUITIN-PROTEIN LIGASE CHIP"/>
    <property type="match status" value="1"/>
</dbReference>
<dbReference type="PANTHER" id="PTHR46803:SF2">
    <property type="entry name" value="E3 UBIQUITIN-PROTEIN LIGASE CHIP"/>
    <property type="match status" value="1"/>
</dbReference>
<dbReference type="Pfam" id="PF13432">
    <property type="entry name" value="TPR_16"/>
    <property type="match status" value="1"/>
</dbReference>
<dbReference type="Pfam" id="PF13181">
    <property type="entry name" value="TPR_8"/>
    <property type="match status" value="1"/>
</dbReference>
<dbReference type="Pfam" id="PF04564">
    <property type="entry name" value="U-box"/>
    <property type="match status" value="1"/>
</dbReference>
<dbReference type="SMART" id="SM00028">
    <property type="entry name" value="TPR"/>
    <property type="match status" value="3"/>
</dbReference>
<dbReference type="SMART" id="SM00504">
    <property type="entry name" value="Ubox"/>
    <property type="match status" value="1"/>
</dbReference>
<dbReference type="SUPFAM" id="SSF57850">
    <property type="entry name" value="RING/U-box"/>
    <property type="match status" value="1"/>
</dbReference>
<dbReference type="SUPFAM" id="SSF48452">
    <property type="entry name" value="TPR-like"/>
    <property type="match status" value="1"/>
</dbReference>
<dbReference type="PROSITE" id="PS50293">
    <property type="entry name" value="TPR_REGION"/>
    <property type="match status" value="1"/>
</dbReference>
<dbReference type="PROSITE" id="PS51698">
    <property type="entry name" value="U_BOX"/>
    <property type="match status" value="1"/>
</dbReference>
<proteinExistence type="evidence at protein level"/>
<name>CHIP_ARATH</name>
<feature type="chain" id="PRO_0000308986" description="E3 ubiquitin-protein ligase CHIP">
    <location>
        <begin position="1"/>
        <end position="278"/>
    </location>
</feature>
<feature type="repeat" description="TPR 1">
    <location>
        <begin position="10"/>
        <end position="43"/>
    </location>
</feature>
<feature type="repeat" description="TPR 2">
    <location>
        <begin position="45"/>
        <end position="77"/>
    </location>
</feature>
<feature type="repeat" description="TPR 3">
    <location>
        <begin position="78"/>
        <end position="111"/>
    </location>
</feature>
<feature type="domain" description="U-box">
    <location>
        <begin position="199"/>
        <end position="273"/>
    </location>
</feature>
<feature type="coiled-coil region" evidence="2">
    <location>
        <begin position="143"/>
        <end position="194"/>
    </location>
</feature>
<gene>
    <name evidence="9" type="primary">CHIP</name>
    <name type="synonym">PUB61</name>
    <name evidence="11" type="ordered locus">At3g07370</name>
    <name evidence="12" type="ORF">F21O3.8</name>
</gene>
<comment type="function">
    <text evidence="3 4 5 6 7">Has E3 ubiquitin-protein ligase activity and may target misfolded substrates towards proteasomal degradation. Regulates the activity of some serine/threonine-protein phosphatases by E3 ubiquitin-protein ligase activity. Required for responses to biotic and abiotic stresses such as auxin, abscisic acid (ABA), low and high temperature and darkness, probably through the activation of serine/threonine-protein phosphatase and the subsequent modification of the plasma membrane composition. Regulates the chloroplastic Clp proteolytic activity in response to stresses. Ubiquitylates FtsH1, a component of the chloroplast FtsH protease, and affects protein degradation in chloroplasts. Mediates plastid precursor degradation to prevent cytosolic precursor accumulation, together with the molecular chaperone HSC70-4. Mediates ubiquitination of transit peptides and thereby led to their degradation through the ubiquitin-proteasome system.</text>
</comment>
<comment type="catalytic activity">
    <reaction evidence="4 5">
        <text>S-ubiquitinyl-[E2 ubiquitin-conjugating enzyme]-L-cysteine + [acceptor protein]-L-lysine = [E2 ubiquitin-conjugating enzyme]-L-cysteine + N(6)-ubiquitinyl-[acceptor protein]-L-lysine.</text>
        <dbReference type="EC" id="2.3.2.27"/>
    </reaction>
</comment>
<comment type="pathway">
    <text evidence="4 5">Protein modification; protein ubiquitination.</text>
</comment>
<comment type="subunit">
    <text evidence="4 5 6 7">Interacts with HSC70-4, PP2AA1, PP2AA3 and PP2A5, as well as with UBC8, UBC9 and UBC10. Also interacts with the chloroplastic proteolytic subunits ClpP4, FtsH1 and FtsH2.</text>
</comment>
<comment type="induction">
    <text evidence="3">By abiotic stresses such as chilling, heat-shock and salts (selenate and NaCl).</text>
</comment>
<comment type="domain">
    <text evidence="1">The U-box domain is required for the ubiquitin protein ligase activity.</text>
</comment>
<sequence length="278" mass="31655">MVTGVASAMAERLKEDGNNCFKKERFGAAIDAYTEAIALSPNVPAYWTNRALCHMKRKDWTKVEEDCRKAIQLVHNSVKAHYMLGLALLQKKEFTNGVKELQRALDLGRCSNPTGYMVEEIWEELSKAKYMEWELVSAMRSWELNSLKETCEAALNQQRALDMSRTEESSDEAYTAHTERLKALERVFKKAAEEDKPTEVPDYLCCNITLEIFRDPVISPSGVTYERAAILEHLKKVGKFDPITREKIDPANLVPNLAIKEAVAAYLEKHVWAYKMGC</sequence>